<proteinExistence type="inferred from homology"/>
<dbReference type="EMBL" id="CY005910">
    <property type="protein sequence ID" value="ABB21825.1"/>
    <property type="molecule type" value="Genomic_RNA"/>
</dbReference>
<dbReference type="SMR" id="Q20NN8"/>
<dbReference type="Proteomes" id="UP000008579">
    <property type="component" value="Genome"/>
</dbReference>
<dbReference type="GO" id="GO:0042025">
    <property type="term" value="C:host cell nucleus"/>
    <property type="evidence" value="ECO:0007669"/>
    <property type="project" value="UniProtKB-SubCell"/>
</dbReference>
<dbReference type="GO" id="GO:0044423">
    <property type="term" value="C:virion component"/>
    <property type="evidence" value="ECO:0007669"/>
    <property type="project" value="UniProtKB-UniRule"/>
</dbReference>
<dbReference type="GO" id="GO:0039675">
    <property type="term" value="P:exit of virus from host cell nucleus through nuclear pore"/>
    <property type="evidence" value="ECO:0007669"/>
    <property type="project" value="UniProtKB-UniRule"/>
</dbReference>
<dbReference type="Gene3D" id="1.10.287.230">
    <property type="match status" value="1"/>
</dbReference>
<dbReference type="Gene3D" id="1.10.287.10">
    <property type="entry name" value="S15/NS1, RNA-binding"/>
    <property type="match status" value="1"/>
</dbReference>
<dbReference type="HAMAP" id="MF_04067">
    <property type="entry name" value="INFV_NEP"/>
    <property type="match status" value="1"/>
</dbReference>
<dbReference type="InterPro" id="IPR000968">
    <property type="entry name" value="Flu_NS2"/>
</dbReference>
<dbReference type="Pfam" id="PF00601">
    <property type="entry name" value="Flu_NS2"/>
    <property type="match status" value="1"/>
</dbReference>
<dbReference type="SUPFAM" id="SSF101156">
    <property type="entry name" value="Nonstructural protein ns2, Nep, M1-binding domain"/>
    <property type="match status" value="1"/>
</dbReference>
<sequence length="121" mass="14338">MDSNTVSSFQDILMRMSKMQLGSSSEDLNGMITQFESLKLYRDSLGEAVMRMGDLHSLQSRNGKWREQLSQKFEEIRWLIEEVRHRLKITENSFEQITFMQALQLLLEVEQEIRTFSFQLI</sequence>
<accession>Q20NN8</accession>
<reference key="1">
    <citation type="journal article" date="2006" name="Science">
        <title>Large-scale sequence analysis of avian influenza isolates.</title>
        <authorList>
            <person name="Obenauer J.C."/>
            <person name="Denson J."/>
            <person name="Mehta P.K."/>
            <person name="Su X."/>
            <person name="Mukatira S."/>
            <person name="Finkelstein D.B."/>
            <person name="Xu X."/>
            <person name="Wang J."/>
            <person name="Ma J."/>
            <person name="Fan Y."/>
            <person name="Rakestraw K.M."/>
            <person name="Webster R.G."/>
            <person name="Hoffmann E."/>
            <person name="Krauss S."/>
            <person name="Zheng J."/>
            <person name="Zhang Z."/>
            <person name="Naeve C.W."/>
        </authorList>
    </citation>
    <scope>NUCLEOTIDE SEQUENCE [GENOMIC RNA]</scope>
</reference>
<organismHost>
    <name type="scientific">Aves</name>
    <dbReference type="NCBI Taxonomy" id="8782"/>
</organismHost>
<feature type="chain" id="PRO_0000324224" description="Nuclear export protein">
    <location>
        <begin position="1"/>
        <end position="121"/>
    </location>
</feature>
<feature type="short sequence motif" description="Nuclear export signal" evidence="1">
    <location>
        <begin position="12"/>
        <end position="21"/>
    </location>
</feature>
<feature type="short sequence motif" description="Nuclear export signal" evidence="1">
    <location>
        <begin position="85"/>
        <end position="94"/>
    </location>
</feature>
<comment type="function">
    <text evidence="1">Mediates the nuclear export of encapsidated genomic RNAs (ribonucleoproteins, RNPs). Acts as an adapter between viral RNPs complexes and the nuclear export machinery of the cell. Possesses no intrinsic RNA-binding activity, but includes a C-terminal M1-binding domain. This domain is believed to allow recognition of RNPs bound to the protein M1. Since protein M1 is not available in large quantities before late stages of infection, such an indirect recognition mechanism probably ensures that genomic RNPs are not exported from the host nucleus until sufficient quantities of viral mRNA and progeny genomic RNA have been synthesized. Furthermore, the RNPs enter the host cytoplasm only when associated with the M1 protein that is necessary to guide them to the plasma membrane. May down-regulate viral RNA synthesis when overproduced.</text>
</comment>
<comment type="subunit">
    <text evidence="1">Interacts with protein M1. May interact with host nucleoporin RAB/HRB and exportin XPO1/CRM1.</text>
</comment>
<comment type="subcellular location">
    <subcellularLocation>
        <location evidence="1">Virion</location>
    </subcellularLocation>
    <subcellularLocation>
        <location evidence="1">Host nucleus</location>
    </subcellularLocation>
</comment>
<comment type="alternative products">
    <event type="alternative splicing"/>
    <isoform>
        <id>Q20NN8-1</id>
        <name>NEP</name>
        <name>NS2</name>
        <sequence type="displayed"/>
    </isoform>
    <isoform>
        <id>Q20NN7-1</id>
        <name>NS1</name>
        <sequence type="external"/>
    </isoform>
</comment>
<comment type="similarity">
    <text evidence="1">Belongs to the influenza viruses NEP family.</text>
</comment>
<gene>
    <name evidence="1" type="primary">NS</name>
</gene>
<protein>
    <recommendedName>
        <fullName evidence="1">Nuclear export protein</fullName>
        <shortName evidence="1">NEP</shortName>
    </recommendedName>
    <alternativeName>
        <fullName evidence="1">Non-structural protein 2</fullName>
        <shortName evidence="1">NS2</shortName>
    </alternativeName>
</protein>
<organism>
    <name type="scientific">Influenza A virus (strain A/Turkey/Minnesota/833/1980 H4N2)</name>
    <dbReference type="NCBI Taxonomy" id="383603"/>
    <lineage>
        <taxon>Viruses</taxon>
        <taxon>Riboviria</taxon>
        <taxon>Orthornavirae</taxon>
        <taxon>Negarnaviricota</taxon>
        <taxon>Polyploviricotina</taxon>
        <taxon>Insthoviricetes</taxon>
        <taxon>Articulavirales</taxon>
        <taxon>Orthomyxoviridae</taxon>
        <taxon>Alphainfluenzavirus</taxon>
        <taxon>Alphainfluenzavirus influenzae</taxon>
        <taxon>Influenza A virus</taxon>
    </lineage>
</organism>
<keyword id="KW-0025">Alternative splicing</keyword>
<keyword id="KW-1048">Host nucleus</keyword>
<keyword id="KW-0945">Host-virus interaction</keyword>
<keyword id="KW-0813">Transport</keyword>
<keyword id="KW-0946">Virion</keyword>
<evidence type="ECO:0000255" key="1">
    <source>
        <dbReference type="HAMAP-Rule" id="MF_04067"/>
    </source>
</evidence>
<name>NEP_I80A8</name>